<keyword id="KW-0004">4Fe-4S</keyword>
<keyword id="KW-0150">Chloroplast</keyword>
<keyword id="KW-0408">Iron</keyword>
<keyword id="KW-0411">Iron-sulfur</keyword>
<keyword id="KW-0472">Membrane</keyword>
<keyword id="KW-0479">Metal-binding</keyword>
<keyword id="KW-0520">NAD</keyword>
<keyword id="KW-0521">NADP</keyword>
<keyword id="KW-0934">Plastid</keyword>
<keyword id="KW-0618">Plastoquinone</keyword>
<keyword id="KW-0874">Quinone</keyword>
<keyword id="KW-0677">Repeat</keyword>
<keyword id="KW-0793">Thylakoid</keyword>
<keyword id="KW-1278">Translocase</keyword>
<name>NDHI_AETCO</name>
<gene>
    <name evidence="1" type="primary">ndhI</name>
</gene>
<geneLocation type="chloroplast"/>
<organism>
    <name type="scientific">Aethionema cordifolium</name>
    <name type="common">Lebanon stonecress</name>
    <dbReference type="NCBI Taxonomy" id="434059"/>
    <lineage>
        <taxon>Eukaryota</taxon>
        <taxon>Viridiplantae</taxon>
        <taxon>Streptophyta</taxon>
        <taxon>Embryophyta</taxon>
        <taxon>Tracheophyta</taxon>
        <taxon>Spermatophyta</taxon>
        <taxon>Magnoliopsida</taxon>
        <taxon>eudicotyledons</taxon>
        <taxon>Gunneridae</taxon>
        <taxon>Pentapetalae</taxon>
        <taxon>rosids</taxon>
        <taxon>malvids</taxon>
        <taxon>Brassicales</taxon>
        <taxon>Brassicaceae</taxon>
        <taxon>Aethionemeae</taxon>
        <taxon>Aethionema</taxon>
    </lineage>
</organism>
<comment type="function">
    <text evidence="1">NDH shuttles electrons from NAD(P)H:plastoquinone, via FMN and iron-sulfur (Fe-S) centers, to quinones in the photosynthetic chain and possibly in a chloroplast respiratory chain. The immediate electron acceptor for the enzyme in this species is believed to be plastoquinone. Couples the redox reaction to proton translocation, and thus conserves the redox energy in a proton gradient.</text>
</comment>
<comment type="catalytic activity">
    <reaction evidence="1">
        <text>a plastoquinone + NADH + (n+1) H(+)(in) = a plastoquinol + NAD(+) + n H(+)(out)</text>
        <dbReference type="Rhea" id="RHEA:42608"/>
        <dbReference type="Rhea" id="RHEA-COMP:9561"/>
        <dbReference type="Rhea" id="RHEA-COMP:9562"/>
        <dbReference type="ChEBI" id="CHEBI:15378"/>
        <dbReference type="ChEBI" id="CHEBI:17757"/>
        <dbReference type="ChEBI" id="CHEBI:57540"/>
        <dbReference type="ChEBI" id="CHEBI:57945"/>
        <dbReference type="ChEBI" id="CHEBI:62192"/>
    </reaction>
</comment>
<comment type="catalytic activity">
    <reaction evidence="1">
        <text>a plastoquinone + NADPH + (n+1) H(+)(in) = a plastoquinol + NADP(+) + n H(+)(out)</text>
        <dbReference type="Rhea" id="RHEA:42612"/>
        <dbReference type="Rhea" id="RHEA-COMP:9561"/>
        <dbReference type="Rhea" id="RHEA-COMP:9562"/>
        <dbReference type="ChEBI" id="CHEBI:15378"/>
        <dbReference type="ChEBI" id="CHEBI:17757"/>
        <dbReference type="ChEBI" id="CHEBI:57783"/>
        <dbReference type="ChEBI" id="CHEBI:58349"/>
        <dbReference type="ChEBI" id="CHEBI:62192"/>
    </reaction>
</comment>
<comment type="cofactor">
    <cofactor evidence="1">
        <name>[4Fe-4S] cluster</name>
        <dbReference type="ChEBI" id="CHEBI:49883"/>
    </cofactor>
    <text evidence="1">Binds 2 [4Fe-4S] clusters per subunit.</text>
</comment>
<comment type="subunit">
    <text evidence="1">NDH is composed of at least 16 different subunits, 5 of which are encoded in the nucleus.</text>
</comment>
<comment type="subcellular location">
    <subcellularLocation>
        <location evidence="1">Plastid</location>
        <location evidence="1">Chloroplast thylakoid membrane</location>
        <topology evidence="1">Peripheral membrane protein</topology>
    </subcellularLocation>
</comment>
<comment type="similarity">
    <text evidence="1">Belongs to the complex I 23 kDa subunit family.</text>
</comment>
<evidence type="ECO:0000255" key="1">
    <source>
        <dbReference type="HAMAP-Rule" id="MF_01351"/>
    </source>
</evidence>
<reference key="1">
    <citation type="submission" date="2007-03" db="EMBL/GenBank/DDBJ databases">
        <title>Sequencing analysis of Aethionema coridifolium chloroplast DNA.</title>
        <authorList>
            <person name="Hosouchi T."/>
            <person name="Tsuruoka H."/>
            <person name="Kotani H."/>
        </authorList>
    </citation>
    <scope>NUCLEOTIDE SEQUENCE [LARGE SCALE GENOMIC DNA]</scope>
</reference>
<proteinExistence type="inferred from homology"/>
<dbReference type="EC" id="7.1.1.-" evidence="1"/>
<dbReference type="EMBL" id="AP009366">
    <property type="protein sequence ID" value="BAF49825.1"/>
    <property type="molecule type" value="Genomic_DNA"/>
</dbReference>
<dbReference type="RefSeq" id="YP_001123000.1">
    <property type="nucleotide sequence ID" value="NC_009265.1"/>
</dbReference>
<dbReference type="SMR" id="A4QJH0"/>
<dbReference type="GeneID" id="4968590"/>
<dbReference type="GO" id="GO:0009535">
    <property type="term" value="C:chloroplast thylakoid membrane"/>
    <property type="evidence" value="ECO:0007669"/>
    <property type="project" value="UniProtKB-SubCell"/>
</dbReference>
<dbReference type="GO" id="GO:0051539">
    <property type="term" value="F:4 iron, 4 sulfur cluster binding"/>
    <property type="evidence" value="ECO:0007669"/>
    <property type="project" value="UniProtKB-KW"/>
</dbReference>
<dbReference type="GO" id="GO:0005506">
    <property type="term" value="F:iron ion binding"/>
    <property type="evidence" value="ECO:0007669"/>
    <property type="project" value="UniProtKB-UniRule"/>
</dbReference>
<dbReference type="GO" id="GO:0008137">
    <property type="term" value="F:NADH dehydrogenase (ubiquinone) activity"/>
    <property type="evidence" value="ECO:0007669"/>
    <property type="project" value="InterPro"/>
</dbReference>
<dbReference type="GO" id="GO:0048038">
    <property type="term" value="F:quinone binding"/>
    <property type="evidence" value="ECO:0007669"/>
    <property type="project" value="UniProtKB-KW"/>
</dbReference>
<dbReference type="GO" id="GO:0019684">
    <property type="term" value="P:photosynthesis, light reaction"/>
    <property type="evidence" value="ECO:0007669"/>
    <property type="project" value="UniProtKB-UniRule"/>
</dbReference>
<dbReference type="FunFam" id="3.30.70.3270:FF:000006">
    <property type="entry name" value="NAD(P)H-quinone oxidoreductase subunit I, chloroplastic"/>
    <property type="match status" value="1"/>
</dbReference>
<dbReference type="Gene3D" id="3.30.70.3270">
    <property type="match status" value="1"/>
</dbReference>
<dbReference type="HAMAP" id="MF_01351">
    <property type="entry name" value="NDH1_NuoI"/>
    <property type="match status" value="1"/>
</dbReference>
<dbReference type="InterPro" id="IPR017896">
    <property type="entry name" value="4Fe4S_Fe-S-bd"/>
</dbReference>
<dbReference type="InterPro" id="IPR017900">
    <property type="entry name" value="4Fe4S_Fe_S_CS"/>
</dbReference>
<dbReference type="InterPro" id="IPR010226">
    <property type="entry name" value="NADH_quinone_OxRdtase_chainI"/>
</dbReference>
<dbReference type="InterPro" id="IPR004497">
    <property type="entry name" value="NDHI"/>
</dbReference>
<dbReference type="NCBIfam" id="TIGR00403">
    <property type="entry name" value="ndhI"/>
    <property type="match status" value="1"/>
</dbReference>
<dbReference type="NCBIfam" id="TIGR01971">
    <property type="entry name" value="NuoI"/>
    <property type="match status" value="1"/>
</dbReference>
<dbReference type="NCBIfam" id="NF004537">
    <property type="entry name" value="PRK05888.1-3"/>
    <property type="match status" value="1"/>
</dbReference>
<dbReference type="PANTHER" id="PTHR47275">
    <property type="entry name" value="NAD(P)H-QUINONE OXIDOREDUCTASE SUBUNIT I, CHLOROPLASTIC"/>
    <property type="match status" value="1"/>
</dbReference>
<dbReference type="PANTHER" id="PTHR47275:SF1">
    <property type="entry name" value="NAD(P)H-QUINONE OXIDOREDUCTASE SUBUNIT I, CHLOROPLASTIC"/>
    <property type="match status" value="1"/>
</dbReference>
<dbReference type="Pfam" id="PF00037">
    <property type="entry name" value="Fer4"/>
    <property type="match status" value="2"/>
</dbReference>
<dbReference type="SUPFAM" id="SSF54862">
    <property type="entry name" value="4Fe-4S ferredoxins"/>
    <property type="match status" value="1"/>
</dbReference>
<dbReference type="PROSITE" id="PS00198">
    <property type="entry name" value="4FE4S_FER_1"/>
    <property type="match status" value="2"/>
</dbReference>
<dbReference type="PROSITE" id="PS51379">
    <property type="entry name" value="4FE4S_FER_2"/>
    <property type="match status" value="2"/>
</dbReference>
<accession>A4QJH0</accession>
<feature type="chain" id="PRO_0000298565" description="NAD(P)H-quinone oxidoreductase subunit I, chloroplastic">
    <location>
        <begin position="1"/>
        <end position="167"/>
    </location>
</feature>
<feature type="domain" description="4Fe-4S ferredoxin-type 1" evidence="1">
    <location>
        <begin position="55"/>
        <end position="84"/>
    </location>
</feature>
<feature type="domain" description="4Fe-4S ferredoxin-type 2" evidence="1">
    <location>
        <begin position="95"/>
        <end position="124"/>
    </location>
</feature>
<feature type="binding site" evidence="1">
    <location>
        <position position="64"/>
    </location>
    <ligand>
        <name>[4Fe-4S] cluster</name>
        <dbReference type="ChEBI" id="CHEBI:49883"/>
        <label>1</label>
    </ligand>
</feature>
<feature type="binding site" evidence="1">
    <location>
        <position position="67"/>
    </location>
    <ligand>
        <name>[4Fe-4S] cluster</name>
        <dbReference type="ChEBI" id="CHEBI:49883"/>
        <label>1</label>
    </ligand>
</feature>
<feature type="binding site" evidence="1">
    <location>
        <position position="70"/>
    </location>
    <ligand>
        <name>[4Fe-4S] cluster</name>
        <dbReference type="ChEBI" id="CHEBI:49883"/>
        <label>1</label>
    </ligand>
</feature>
<feature type="binding site" evidence="1">
    <location>
        <position position="74"/>
    </location>
    <ligand>
        <name>[4Fe-4S] cluster</name>
        <dbReference type="ChEBI" id="CHEBI:49883"/>
        <label>2</label>
    </ligand>
</feature>
<feature type="binding site" evidence="1">
    <location>
        <position position="104"/>
    </location>
    <ligand>
        <name>[4Fe-4S] cluster</name>
        <dbReference type="ChEBI" id="CHEBI:49883"/>
        <label>2</label>
    </ligand>
</feature>
<feature type="binding site" evidence="1">
    <location>
        <position position="107"/>
    </location>
    <ligand>
        <name>[4Fe-4S] cluster</name>
        <dbReference type="ChEBI" id="CHEBI:49883"/>
        <label>2</label>
    </ligand>
</feature>
<feature type="binding site" evidence="1">
    <location>
        <position position="110"/>
    </location>
    <ligand>
        <name>[4Fe-4S] cluster</name>
        <dbReference type="ChEBI" id="CHEBI:49883"/>
        <label>2</label>
    </ligand>
</feature>
<feature type="binding site" evidence="1">
    <location>
        <position position="114"/>
    </location>
    <ligand>
        <name>[4Fe-4S] cluster</name>
        <dbReference type="ChEBI" id="CHEBI:49883"/>
        <label>1</label>
    </ligand>
</feature>
<protein>
    <recommendedName>
        <fullName evidence="1">NAD(P)H-quinone oxidoreductase subunit I, chloroplastic</fullName>
        <ecNumber evidence="1">7.1.1.-</ecNumber>
    </recommendedName>
    <alternativeName>
        <fullName evidence="1">NAD(P)H dehydrogenase subunit I</fullName>
        <shortName evidence="1">NDH subunit I</shortName>
    </alternativeName>
    <alternativeName>
        <fullName evidence="1">NADH-plastoquinone oxidoreductase subunit I</fullName>
    </alternativeName>
</protein>
<sequence>MLPMITGFMNYGQQTLRAARYIGQGFMITLSHTNRLPVTIQYPYEKLITSERFRGRIHFEFDKCIACEVCVRVCPIDLPVVDWKLETPIRKKRLLNYSIDFGICIFCGNCVEYCPTNCLSMTEEYEFSTYDRHELNYNQIALGRLPISVIDDYTIRTILNSPQIKNG</sequence>